<sequence length="623" mass="68061">MTDYDVIVIGGGHAGCEAASASARLGARTVLITHKMDTIGVMSCNPAIGGLGKGHLVREIDALDGLMGRVADAAGIQFRLLNRRKGPAVRGPRTQADRKLYREAMQREISGIENLSVIEGDAFDLLTEDGVVCGTAMKDGRIFRAAAVVLTTGTFLKGLIHIGQRKIPAGRVGEEPSLGLSGTLRRFGLQLGRLKTGTPARLDGRTIDWDRVGRQGPDENPVPFSFMTDAIINRQIDCGVTRTTDATHKIIADNIHQSAMYSGQIEGVGPRYCPSIEDKIVRFGERDGHQIFLEPEGLDDDTVYPNGISTSLPEDVQDAFIRTIPGLEQVKILQPGYAIEYDHVDPRELELSLGVRKMPGLFLAGQINGTTGYEEAGAQGLVAGLNAALRSIGRAPHFFSRTDSYIGVMIDDLTSRGITEPYRMFTSRAEYRLSLRADNADMRLTPAGITLGCVGDARRQRFEAWKHSYETGRTLLQSLSVTPSEGKRFGLKLNQDGQRRTAFDILSYPDQSIAALKPLWPELQTIPAGVVEALEIDAAYAVYMERQATDIAGVRRDENTSIPDDFDYEVLPGLSNELKQKLAQHKPRNLAQAMKVDGVTPAAISLILSWLRRQVRQAQRVGG</sequence>
<reference key="1">
    <citation type="journal article" date="2001" name="Proc. Natl. Acad. Sci. U.S.A.">
        <title>Analysis of the chromosome sequence of the legume symbiont Sinorhizobium meliloti strain 1021.</title>
        <authorList>
            <person name="Capela D."/>
            <person name="Barloy-Hubler F."/>
            <person name="Gouzy J."/>
            <person name="Bothe G."/>
            <person name="Ampe F."/>
            <person name="Batut J."/>
            <person name="Boistard P."/>
            <person name="Becker A."/>
            <person name="Boutry M."/>
            <person name="Cadieu E."/>
            <person name="Dreano S."/>
            <person name="Gloux S."/>
            <person name="Godrie T."/>
            <person name="Goffeau A."/>
            <person name="Kahn D."/>
            <person name="Kiss E."/>
            <person name="Lelaure V."/>
            <person name="Masuy D."/>
            <person name="Pohl T."/>
            <person name="Portetelle D."/>
            <person name="Puehler A."/>
            <person name="Purnelle B."/>
            <person name="Ramsperger U."/>
            <person name="Renard C."/>
            <person name="Thebault P."/>
            <person name="Vandenbol M."/>
            <person name="Weidner S."/>
            <person name="Galibert F."/>
        </authorList>
    </citation>
    <scope>NUCLEOTIDE SEQUENCE [LARGE SCALE GENOMIC DNA]</scope>
    <source>
        <strain>1021</strain>
    </source>
</reference>
<reference key="2">
    <citation type="journal article" date="2001" name="Science">
        <title>The composite genome of the legume symbiont Sinorhizobium meliloti.</title>
        <authorList>
            <person name="Galibert F."/>
            <person name="Finan T.M."/>
            <person name="Long S.R."/>
            <person name="Puehler A."/>
            <person name="Abola P."/>
            <person name="Ampe F."/>
            <person name="Barloy-Hubler F."/>
            <person name="Barnett M.J."/>
            <person name="Becker A."/>
            <person name="Boistard P."/>
            <person name="Bothe G."/>
            <person name="Boutry M."/>
            <person name="Bowser L."/>
            <person name="Buhrmester J."/>
            <person name="Cadieu E."/>
            <person name="Capela D."/>
            <person name="Chain P."/>
            <person name="Cowie A."/>
            <person name="Davis R.W."/>
            <person name="Dreano S."/>
            <person name="Federspiel N.A."/>
            <person name="Fisher R.F."/>
            <person name="Gloux S."/>
            <person name="Godrie T."/>
            <person name="Goffeau A."/>
            <person name="Golding B."/>
            <person name="Gouzy J."/>
            <person name="Gurjal M."/>
            <person name="Hernandez-Lucas I."/>
            <person name="Hong A."/>
            <person name="Huizar L."/>
            <person name="Hyman R.W."/>
            <person name="Jones T."/>
            <person name="Kahn D."/>
            <person name="Kahn M.L."/>
            <person name="Kalman S."/>
            <person name="Keating D.H."/>
            <person name="Kiss E."/>
            <person name="Komp C."/>
            <person name="Lelaure V."/>
            <person name="Masuy D."/>
            <person name="Palm C."/>
            <person name="Peck M.C."/>
            <person name="Pohl T.M."/>
            <person name="Portetelle D."/>
            <person name="Purnelle B."/>
            <person name="Ramsperger U."/>
            <person name="Surzycki R."/>
            <person name="Thebault P."/>
            <person name="Vandenbol M."/>
            <person name="Vorhoelter F.J."/>
            <person name="Weidner S."/>
            <person name="Wells D.H."/>
            <person name="Wong K."/>
            <person name="Yeh K.-C."/>
            <person name="Batut J."/>
        </authorList>
    </citation>
    <scope>NUCLEOTIDE SEQUENCE [LARGE SCALE GENOMIC DNA]</scope>
    <source>
        <strain>1021</strain>
    </source>
</reference>
<organism>
    <name type="scientific">Rhizobium meliloti (strain 1021)</name>
    <name type="common">Ensifer meliloti</name>
    <name type="synonym">Sinorhizobium meliloti</name>
    <dbReference type="NCBI Taxonomy" id="266834"/>
    <lineage>
        <taxon>Bacteria</taxon>
        <taxon>Pseudomonadati</taxon>
        <taxon>Pseudomonadota</taxon>
        <taxon>Alphaproteobacteria</taxon>
        <taxon>Hyphomicrobiales</taxon>
        <taxon>Rhizobiaceae</taxon>
        <taxon>Sinorhizobium/Ensifer group</taxon>
        <taxon>Sinorhizobium</taxon>
    </lineage>
</organism>
<name>MNMG_RHIME</name>
<protein>
    <recommendedName>
        <fullName evidence="1">tRNA uridine 5-carboxymethylaminomethyl modification enzyme MnmG</fullName>
    </recommendedName>
    <alternativeName>
        <fullName evidence="1">Glucose-inhibited division protein A</fullName>
    </alternativeName>
</protein>
<dbReference type="EMBL" id="AL591688">
    <property type="protein sequence ID" value="CAC47916.1"/>
    <property type="molecule type" value="Genomic_DNA"/>
</dbReference>
<dbReference type="RefSeq" id="NP_387443.1">
    <property type="nucleotide sequence ID" value="NC_003047.1"/>
</dbReference>
<dbReference type="RefSeq" id="WP_010970585.1">
    <property type="nucleotide sequence ID" value="NC_003047.1"/>
</dbReference>
<dbReference type="SMR" id="Q92KW2"/>
<dbReference type="EnsemblBacteria" id="CAC47916">
    <property type="protein sequence ID" value="CAC47916"/>
    <property type="gene ID" value="SMc02798"/>
</dbReference>
<dbReference type="KEGG" id="sme:SMc02798"/>
<dbReference type="PATRIC" id="fig|266834.11.peg.4898"/>
<dbReference type="eggNOG" id="COG0445">
    <property type="taxonomic scope" value="Bacteria"/>
</dbReference>
<dbReference type="HOGENOM" id="CLU_007831_2_2_5"/>
<dbReference type="OrthoDB" id="9815560at2"/>
<dbReference type="Proteomes" id="UP000001976">
    <property type="component" value="Chromosome"/>
</dbReference>
<dbReference type="GO" id="GO:0005829">
    <property type="term" value="C:cytosol"/>
    <property type="evidence" value="ECO:0007669"/>
    <property type="project" value="TreeGrafter"/>
</dbReference>
<dbReference type="GO" id="GO:0050660">
    <property type="term" value="F:flavin adenine dinucleotide binding"/>
    <property type="evidence" value="ECO:0007669"/>
    <property type="project" value="UniProtKB-UniRule"/>
</dbReference>
<dbReference type="GO" id="GO:0030488">
    <property type="term" value="P:tRNA methylation"/>
    <property type="evidence" value="ECO:0007669"/>
    <property type="project" value="TreeGrafter"/>
</dbReference>
<dbReference type="GO" id="GO:0002098">
    <property type="term" value="P:tRNA wobble uridine modification"/>
    <property type="evidence" value="ECO:0007669"/>
    <property type="project" value="InterPro"/>
</dbReference>
<dbReference type="FunFam" id="3.50.50.60:FF:000082">
    <property type="entry name" value="protein MTO1 homolog, mitochondrial isoform X1"/>
    <property type="match status" value="1"/>
</dbReference>
<dbReference type="FunFam" id="1.10.150.570:FF:000001">
    <property type="entry name" value="tRNA uridine 5-carboxymethylaminomethyl modification enzyme MnmG"/>
    <property type="match status" value="1"/>
</dbReference>
<dbReference type="FunFam" id="3.50.50.60:FF:000002">
    <property type="entry name" value="tRNA uridine 5-carboxymethylaminomethyl modification enzyme MnmG"/>
    <property type="match status" value="1"/>
</dbReference>
<dbReference type="Gene3D" id="3.50.50.60">
    <property type="entry name" value="FAD/NAD(P)-binding domain"/>
    <property type="match status" value="2"/>
</dbReference>
<dbReference type="Gene3D" id="1.10.150.570">
    <property type="entry name" value="GidA associated domain, C-terminal subdomain"/>
    <property type="match status" value="1"/>
</dbReference>
<dbReference type="HAMAP" id="MF_00129">
    <property type="entry name" value="MnmG_GidA"/>
    <property type="match status" value="1"/>
</dbReference>
<dbReference type="InterPro" id="IPR036188">
    <property type="entry name" value="FAD/NAD-bd_sf"/>
</dbReference>
<dbReference type="InterPro" id="IPR049312">
    <property type="entry name" value="GIDA_C_N"/>
</dbReference>
<dbReference type="InterPro" id="IPR004416">
    <property type="entry name" value="MnmG"/>
</dbReference>
<dbReference type="InterPro" id="IPR002218">
    <property type="entry name" value="MnmG-rel"/>
</dbReference>
<dbReference type="InterPro" id="IPR020595">
    <property type="entry name" value="MnmG-rel_CS"/>
</dbReference>
<dbReference type="InterPro" id="IPR026904">
    <property type="entry name" value="MnmG_C"/>
</dbReference>
<dbReference type="InterPro" id="IPR047001">
    <property type="entry name" value="MnmG_C_subdom"/>
</dbReference>
<dbReference type="InterPro" id="IPR044920">
    <property type="entry name" value="MnmG_C_subdom_sf"/>
</dbReference>
<dbReference type="InterPro" id="IPR040131">
    <property type="entry name" value="MnmG_N"/>
</dbReference>
<dbReference type="NCBIfam" id="TIGR00136">
    <property type="entry name" value="mnmG_gidA"/>
    <property type="match status" value="1"/>
</dbReference>
<dbReference type="PANTHER" id="PTHR11806">
    <property type="entry name" value="GLUCOSE INHIBITED DIVISION PROTEIN A"/>
    <property type="match status" value="1"/>
</dbReference>
<dbReference type="PANTHER" id="PTHR11806:SF0">
    <property type="entry name" value="PROTEIN MTO1 HOMOLOG, MITOCHONDRIAL"/>
    <property type="match status" value="1"/>
</dbReference>
<dbReference type="Pfam" id="PF01134">
    <property type="entry name" value="GIDA"/>
    <property type="match status" value="1"/>
</dbReference>
<dbReference type="Pfam" id="PF21680">
    <property type="entry name" value="GIDA_C_1st"/>
    <property type="match status" value="1"/>
</dbReference>
<dbReference type="Pfam" id="PF13932">
    <property type="entry name" value="SAM_GIDA_C"/>
    <property type="match status" value="1"/>
</dbReference>
<dbReference type="SMART" id="SM01228">
    <property type="entry name" value="GIDA_assoc_3"/>
    <property type="match status" value="1"/>
</dbReference>
<dbReference type="SUPFAM" id="SSF51905">
    <property type="entry name" value="FAD/NAD(P)-binding domain"/>
    <property type="match status" value="1"/>
</dbReference>
<dbReference type="PROSITE" id="PS01280">
    <property type="entry name" value="GIDA_1"/>
    <property type="match status" value="1"/>
</dbReference>
<dbReference type="PROSITE" id="PS01281">
    <property type="entry name" value="GIDA_2"/>
    <property type="match status" value="1"/>
</dbReference>
<accession>Q92KW2</accession>
<evidence type="ECO:0000255" key="1">
    <source>
        <dbReference type="HAMAP-Rule" id="MF_00129"/>
    </source>
</evidence>
<feature type="chain" id="PRO_0000117161" description="tRNA uridine 5-carboxymethylaminomethyl modification enzyme MnmG">
    <location>
        <begin position="1"/>
        <end position="623"/>
    </location>
</feature>
<feature type="binding site" evidence="1">
    <location>
        <begin position="10"/>
        <end position="15"/>
    </location>
    <ligand>
        <name>FAD</name>
        <dbReference type="ChEBI" id="CHEBI:57692"/>
    </ligand>
</feature>
<feature type="binding site" evidence="1">
    <location>
        <begin position="269"/>
        <end position="283"/>
    </location>
    <ligand>
        <name>NAD(+)</name>
        <dbReference type="ChEBI" id="CHEBI:57540"/>
    </ligand>
</feature>
<proteinExistence type="inferred from homology"/>
<gene>
    <name evidence="1" type="primary">mnmG</name>
    <name evidence="1" type="synonym">gidA</name>
    <name type="ordered locus">R03337</name>
    <name type="ORF">SMc02798</name>
</gene>
<comment type="function">
    <text evidence="1">NAD-binding protein involved in the addition of a carboxymethylaminomethyl (cmnm) group at the wobble position (U34) of certain tRNAs, forming tRNA-cmnm(5)s(2)U34.</text>
</comment>
<comment type="cofactor">
    <cofactor evidence="1">
        <name>FAD</name>
        <dbReference type="ChEBI" id="CHEBI:57692"/>
    </cofactor>
</comment>
<comment type="subunit">
    <text evidence="1">Homodimer. Heterotetramer of two MnmE and two MnmG subunits.</text>
</comment>
<comment type="subcellular location">
    <subcellularLocation>
        <location evidence="1">Cytoplasm</location>
    </subcellularLocation>
</comment>
<comment type="similarity">
    <text evidence="1">Belongs to the MnmG family.</text>
</comment>
<keyword id="KW-0963">Cytoplasm</keyword>
<keyword id="KW-0274">FAD</keyword>
<keyword id="KW-0285">Flavoprotein</keyword>
<keyword id="KW-0520">NAD</keyword>
<keyword id="KW-1185">Reference proteome</keyword>
<keyword id="KW-0819">tRNA processing</keyword>